<feature type="chain" id="PRO_0000122810" description="Protein RecA">
    <location>
        <begin position="1"/>
        <end position="352"/>
    </location>
</feature>
<feature type="binding site" evidence="1">
    <location>
        <begin position="65"/>
        <end position="72"/>
    </location>
    <ligand>
        <name>ATP</name>
        <dbReference type="ChEBI" id="CHEBI:30616"/>
    </ligand>
</feature>
<evidence type="ECO:0000255" key="1">
    <source>
        <dbReference type="HAMAP-Rule" id="MF_00268"/>
    </source>
</evidence>
<dbReference type="EMBL" id="AJ249265">
    <property type="protein sequence ID" value="CAB65373.1"/>
    <property type="molecule type" value="Genomic_DNA"/>
</dbReference>
<dbReference type="RefSeq" id="WP_016970800.1">
    <property type="nucleotide sequence ID" value="NZ_VZPT01000003.1"/>
</dbReference>
<dbReference type="SMR" id="Q9RDU0"/>
<dbReference type="GeneID" id="55845948"/>
<dbReference type="GO" id="GO:0005829">
    <property type="term" value="C:cytosol"/>
    <property type="evidence" value="ECO:0007669"/>
    <property type="project" value="TreeGrafter"/>
</dbReference>
<dbReference type="GO" id="GO:0005524">
    <property type="term" value="F:ATP binding"/>
    <property type="evidence" value="ECO:0007669"/>
    <property type="project" value="UniProtKB-UniRule"/>
</dbReference>
<dbReference type="GO" id="GO:0016887">
    <property type="term" value="F:ATP hydrolysis activity"/>
    <property type="evidence" value="ECO:0007669"/>
    <property type="project" value="InterPro"/>
</dbReference>
<dbReference type="GO" id="GO:0140664">
    <property type="term" value="F:ATP-dependent DNA damage sensor activity"/>
    <property type="evidence" value="ECO:0007669"/>
    <property type="project" value="InterPro"/>
</dbReference>
<dbReference type="GO" id="GO:0003684">
    <property type="term" value="F:damaged DNA binding"/>
    <property type="evidence" value="ECO:0007669"/>
    <property type="project" value="UniProtKB-UniRule"/>
</dbReference>
<dbReference type="GO" id="GO:0003697">
    <property type="term" value="F:single-stranded DNA binding"/>
    <property type="evidence" value="ECO:0007669"/>
    <property type="project" value="UniProtKB-UniRule"/>
</dbReference>
<dbReference type="GO" id="GO:0006310">
    <property type="term" value="P:DNA recombination"/>
    <property type="evidence" value="ECO:0007669"/>
    <property type="project" value="UniProtKB-UniRule"/>
</dbReference>
<dbReference type="GO" id="GO:0006281">
    <property type="term" value="P:DNA repair"/>
    <property type="evidence" value="ECO:0007669"/>
    <property type="project" value="UniProtKB-UniRule"/>
</dbReference>
<dbReference type="GO" id="GO:0009432">
    <property type="term" value="P:SOS response"/>
    <property type="evidence" value="ECO:0007669"/>
    <property type="project" value="UniProtKB-UniRule"/>
</dbReference>
<dbReference type="CDD" id="cd00983">
    <property type="entry name" value="RecA"/>
    <property type="match status" value="1"/>
</dbReference>
<dbReference type="FunFam" id="3.40.50.300:FF:000087">
    <property type="entry name" value="Recombinase RecA"/>
    <property type="match status" value="1"/>
</dbReference>
<dbReference type="Gene3D" id="3.40.50.300">
    <property type="entry name" value="P-loop containing nucleotide triphosphate hydrolases"/>
    <property type="match status" value="1"/>
</dbReference>
<dbReference type="HAMAP" id="MF_00268">
    <property type="entry name" value="RecA"/>
    <property type="match status" value="1"/>
</dbReference>
<dbReference type="InterPro" id="IPR003593">
    <property type="entry name" value="AAA+_ATPase"/>
</dbReference>
<dbReference type="InterPro" id="IPR013765">
    <property type="entry name" value="DNA_recomb/repair_RecA"/>
</dbReference>
<dbReference type="InterPro" id="IPR020584">
    <property type="entry name" value="DNA_recomb/repair_RecA_CS"/>
</dbReference>
<dbReference type="InterPro" id="IPR027417">
    <property type="entry name" value="P-loop_NTPase"/>
</dbReference>
<dbReference type="InterPro" id="IPR049261">
    <property type="entry name" value="RecA-like_C"/>
</dbReference>
<dbReference type="InterPro" id="IPR049428">
    <property type="entry name" value="RecA-like_N"/>
</dbReference>
<dbReference type="InterPro" id="IPR020588">
    <property type="entry name" value="RecA_ATP-bd"/>
</dbReference>
<dbReference type="InterPro" id="IPR023400">
    <property type="entry name" value="RecA_C_sf"/>
</dbReference>
<dbReference type="InterPro" id="IPR020587">
    <property type="entry name" value="RecA_monomer-monomer_interface"/>
</dbReference>
<dbReference type="NCBIfam" id="TIGR02012">
    <property type="entry name" value="tigrfam_recA"/>
    <property type="match status" value="1"/>
</dbReference>
<dbReference type="PANTHER" id="PTHR45900:SF1">
    <property type="entry name" value="MITOCHONDRIAL DNA REPAIR PROTEIN RECA HOMOLOG-RELATED"/>
    <property type="match status" value="1"/>
</dbReference>
<dbReference type="PANTHER" id="PTHR45900">
    <property type="entry name" value="RECA"/>
    <property type="match status" value="1"/>
</dbReference>
<dbReference type="Pfam" id="PF00154">
    <property type="entry name" value="RecA"/>
    <property type="match status" value="1"/>
</dbReference>
<dbReference type="Pfam" id="PF21096">
    <property type="entry name" value="RecA_C"/>
    <property type="match status" value="1"/>
</dbReference>
<dbReference type="PRINTS" id="PR00142">
    <property type="entry name" value="RECA"/>
</dbReference>
<dbReference type="SMART" id="SM00382">
    <property type="entry name" value="AAA"/>
    <property type="match status" value="1"/>
</dbReference>
<dbReference type="SUPFAM" id="SSF52540">
    <property type="entry name" value="P-loop containing nucleoside triphosphate hydrolases"/>
    <property type="match status" value="1"/>
</dbReference>
<dbReference type="SUPFAM" id="SSF54752">
    <property type="entry name" value="RecA protein, C-terminal domain"/>
    <property type="match status" value="1"/>
</dbReference>
<dbReference type="PROSITE" id="PS00321">
    <property type="entry name" value="RECA_1"/>
    <property type="match status" value="1"/>
</dbReference>
<dbReference type="PROSITE" id="PS50162">
    <property type="entry name" value="RECA_2"/>
    <property type="match status" value="1"/>
</dbReference>
<dbReference type="PROSITE" id="PS50163">
    <property type="entry name" value="RECA_3"/>
    <property type="match status" value="1"/>
</dbReference>
<keyword id="KW-0067">ATP-binding</keyword>
<keyword id="KW-0963">Cytoplasm</keyword>
<keyword id="KW-0227">DNA damage</keyword>
<keyword id="KW-0233">DNA recombination</keyword>
<keyword id="KW-0234">DNA repair</keyword>
<keyword id="KW-0238">DNA-binding</keyword>
<keyword id="KW-0547">Nucleotide-binding</keyword>
<keyword id="KW-0742">SOS response</keyword>
<name>RECA_PSETO</name>
<protein>
    <recommendedName>
        <fullName evidence="1">Protein RecA</fullName>
    </recommendedName>
    <alternativeName>
        <fullName evidence="1">Recombinase A</fullName>
    </alternativeName>
</protein>
<reference key="1">
    <citation type="journal article" date="2000" name="J. Bacteriol.">
        <title>Analysis of the role of recA in phenotypic switching of Pseudomonas tolaasii.</title>
        <authorList>
            <person name="Sinha H."/>
            <person name="Pain A."/>
            <person name="Johnstone K."/>
        </authorList>
    </citation>
    <scope>NUCLEOTIDE SEQUENCE [GENOMIC DNA]</scope>
    <source>
        <strain>1116S</strain>
    </source>
</reference>
<gene>
    <name evidence="1" type="primary">recA</name>
</gene>
<sequence length="352" mass="37626">MDDNKKKALAAALGQIERQFGKGAVMRMGDHDRQAIPAISTGSLGLDIALGIGGLPKGRIVEIYGPESSGKTTLTLSVIAQAQKMGATCAFVDAEHALDPEYAGKLGVNVDDLLVSQPDTGEQALEITDMLVRSNAIDVIVVDSVAALVPKAEIEGEMGDMHVGLQARLMSQALRKITGNIKNANCLVIFINQIRMKIGVMFGSPETTTGGNALKFYASVRLDIRRTGAVKEGDEVVGSETRVKVVKNKVAPPFRQAEFQILYGKGIYLNGEMIDLGVLHGFVEKSGAWYAYNGSKIGQGKANSAKFLADNPDIAATLEKQIRDKLLTAAPDVKAAANREPVDEMEEVDTDI</sequence>
<organism>
    <name type="scientific">Pseudomonas tolaasii</name>
    <dbReference type="NCBI Taxonomy" id="29442"/>
    <lineage>
        <taxon>Bacteria</taxon>
        <taxon>Pseudomonadati</taxon>
        <taxon>Pseudomonadota</taxon>
        <taxon>Gammaproteobacteria</taxon>
        <taxon>Pseudomonadales</taxon>
        <taxon>Pseudomonadaceae</taxon>
        <taxon>Pseudomonas</taxon>
    </lineage>
</organism>
<proteinExistence type="inferred from homology"/>
<accession>Q9RDU0</accession>
<comment type="function">
    <text>Can catalyze the hydrolysis of ATP in the presence of single-stranded DNA, the ATP-dependent uptake of single-stranded DNA by duplex DNA, and the ATP-dependent hybridization of homologous single-stranded DNAs. It interacts with LexA causing its activation and leading to its autocatalytic cleavage. Plays a functional role in the DNA rearrangement associated with the phenotypic switching from a pathogenic smooth to a nonpathogenic rough form in this bacterium.</text>
</comment>
<comment type="subcellular location">
    <subcellularLocation>
        <location evidence="1">Cytoplasm</location>
    </subcellularLocation>
</comment>
<comment type="similarity">
    <text evidence="1">Belongs to the RecA family.</text>
</comment>